<comment type="function">
    <text evidence="2">Essential component of the signal peptidase complex (SPC) which catalyzes the cleavage of N-terminal signal sequences from nascent proteins as they are translocated into the lumen of the endoplasmic reticulum. Essential for the SPC catalytic activity, possibly by stabilizing and positioning the active center of the complex close to the lumenal surface. Essential for viability.</text>
</comment>
<comment type="subunit">
    <text evidence="1 2">Component of the signal peptidase complex (SPC) composed of a catalytic subunit SEC11 and three accessory subunits SPC1, SPC2 and SPC3 (By similarity). The complex induces a local thinning of the ER membrane which is used to measure the length of the signal peptide (SP) h-region of protein substrates. This ensures the selectivity of the complex towards h-regions shorter than 18-20 amino acids (By similarity). SPC associates with the translocon complex (By similarity).</text>
</comment>
<comment type="subcellular location">
    <subcellularLocation>
        <location evidence="2">Endoplasmic reticulum membrane</location>
        <topology evidence="2">Single-pass type II membrane protein</topology>
    </subcellularLocation>
</comment>
<comment type="similarity">
    <text evidence="4">Belongs to the SPCS3 family.</text>
</comment>
<proteinExistence type="inferred from homology"/>
<dbReference type="EMBL" id="CR382137">
    <property type="protein sequence ID" value="CAG88178.2"/>
    <property type="molecule type" value="Genomic_DNA"/>
</dbReference>
<dbReference type="RefSeq" id="XP_459934.2">
    <property type="nucleotide sequence ID" value="XM_459934.1"/>
</dbReference>
<dbReference type="SMR" id="Q6BPD6"/>
<dbReference type="FunCoup" id="Q6BPD6">
    <property type="interactions" value="449"/>
</dbReference>
<dbReference type="STRING" id="284592.Q6BPD6"/>
<dbReference type="GeneID" id="2902208"/>
<dbReference type="KEGG" id="dha:DEHA2E14454g"/>
<dbReference type="VEuPathDB" id="FungiDB:DEHA2E14454g"/>
<dbReference type="eggNOG" id="KOG3372">
    <property type="taxonomic scope" value="Eukaryota"/>
</dbReference>
<dbReference type="HOGENOM" id="CLU_068714_2_1_1"/>
<dbReference type="InParanoid" id="Q6BPD6"/>
<dbReference type="OMA" id="LHWNIQP"/>
<dbReference type="OrthoDB" id="10261524at2759"/>
<dbReference type="Proteomes" id="UP000000599">
    <property type="component" value="Chromosome E"/>
</dbReference>
<dbReference type="GO" id="GO:0005787">
    <property type="term" value="C:signal peptidase complex"/>
    <property type="evidence" value="ECO:0007669"/>
    <property type="project" value="EnsemblFungi"/>
</dbReference>
<dbReference type="GO" id="GO:0045047">
    <property type="term" value="P:protein targeting to ER"/>
    <property type="evidence" value="ECO:0007669"/>
    <property type="project" value="EnsemblFungi"/>
</dbReference>
<dbReference type="GO" id="GO:0006465">
    <property type="term" value="P:signal peptide processing"/>
    <property type="evidence" value="ECO:0007669"/>
    <property type="project" value="EnsemblFungi"/>
</dbReference>
<dbReference type="InterPro" id="IPR007653">
    <property type="entry name" value="SPC3"/>
</dbReference>
<dbReference type="PANTHER" id="PTHR12804">
    <property type="entry name" value="MICROSOMAL SIGNAL PEPTIDASE 23 KD SUBUNIT SPC22/23"/>
    <property type="match status" value="1"/>
</dbReference>
<dbReference type="PANTHER" id="PTHR12804:SF0">
    <property type="entry name" value="SIGNAL PEPTIDASE COMPLEX SUBUNIT 3"/>
    <property type="match status" value="1"/>
</dbReference>
<dbReference type="Pfam" id="PF04573">
    <property type="entry name" value="SPC22"/>
    <property type="match status" value="1"/>
</dbReference>
<dbReference type="PIRSF" id="PIRSF016089">
    <property type="entry name" value="SPC22"/>
    <property type="match status" value="1"/>
</dbReference>
<organism>
    <name type="scientific">Debaryomyces hansenii (strain ATCC 36239 / CBS 767 / BCRC 21394 / JCM 1990 / NBRC 0083 / IGC 2968)</name>
    <name type="common">Yeast</name>
    <name type="synonym">Torulaspora hansenii</name>
    <dbReference type="NCBI Taxonomy" id="284592"/>
    <lineage>
        <taxon>Eukaryota</taxon>
        <taxon>Fungi</taxon>
        <taxon>Dikarya</taxon>
        <taxon>Ascomycota</taxon>
        <taxon>Saccharomycotina</taxon>
        <taxon>Pichiomycetes</taxon>
        <taxon>Debaryomycetaceae</taxon>
        <taxon>Debaryomyces</taxon>
    </lineage>
</organism>
<keyword id="KW-0256">Endoplasmic reticulum</keyword>
<keyword id="KW-0472">Membrane</keyword>
<keyword id="KW-1185">Reference proteome</keyword>
<keyword id="KW-0735">Signal-anchor</keyword>
<keyword id="KW-0812">Transmembrane</keyword>
<keyword id="KW-1133">Transmembrane helix</keyword>
<reference key="1">
    <citation type="journal article" date="2004" name="Nature">
        <title>Genome evolution in yeasts.</title>
        <authorList>
            <person name="Dujon B."/>
            <person name="Sherman D."/>
            <person name="Fischer G."/>
            <person name="Durrens P."/>
            <person name="Casaregola S."/>
            <person name="Lafontaine I."/>
            <person name="de Montigny J."/>
            <person name="Marck C."/>
            <person name="Neuveglise C."/>
            <person name="Talla E."/>
            <person name="Goffard N."/>
            <person name="Frangeul L."/>
            <person name="Aigle M."/>
            <person name="Anthouard V."/>
            <person name="Babour A."/>
            <person name="Barbe V."/>
            <person name="Barnay S."/>
            <person name="Blanchin S."/>
            <person name="Beckerich J.-M."/>
            <person name="Beyne E."/>
            <person name="Bleykasten C."/>
            <person name="Boisrame A."/>
            <person name="Boyer J."/>
            <person name="Cattolico L."/>
            <person name="Confanioleri F."/>
            <person name="de Daruvar A."/>
            <person name="Despons L."/>
            <person name="Fabre E."/>
            <person name="Fairhead C."/>
            <person name="Ferry-Dumazet H."/>
            <person name="Groppi A."/>
            <person name="Hantraye F."/>
            <person name="Hennequin C."/>
            <person name="Jauniaux N."/>
            <person name="Joyet P."/>
            <person name="Kachouri R."/>
            <person name="Kerrest A."/>
            <person name="Koszul R."/>
            <person name="Lemaire M."/>
            <person name="Lesur I."/>
            <person name="Ma L."/>
            <person name="Muller H."/>
            <person name="Nicaud J.-M."/>
            <person name="Nikolski M."/>
            <person name="Oztas S."/>
            <person name="Ozier-Kalogeropoulos O."/>
            <person name="Pellenz S."/>
            <person name="Potier S."/>
            <person name="Richard G.-F."/>
            <person name="Straub M.-L."/>
            <person name="Suleau A."/>
            <person name="Swennen D."/>
            <person name="Tekaia F."/>
            <person name="Wesolowski-Louvel M."/>
            <person name="Westhof E."/>
            <person name="Wirth B."/>
            <person name="Zeniou-Meyer M."/>
            <person name="Zivanovic Y."/>
            <person name="Bolotin-Fukuhara M."/>
            <person name="Thierry A."/>
            <person name="Bouchier C."/>
            <person name="Caudron B."/>
            <person name="Scarpelli C."/>
            <person name="Gaillardin C."/>
            <person name="Weissenbach J."/>
            <person name="Wincker P."/>
            <person name="Souciet J.-L."/>
        </authorList>
    </citation>
    <scope>NUCLEOTIDE SEQUENCE [LARGE SCALE GENOMIC DNA]</scope>
    <source>
        <strain>ATCC 36239 / CBS 767 / BCRC 21394 / JCM 1990 / NBRC 0083 / IGC 2968</strain>
    </source>
</reference>
<feature type="chain" id="PRO_0000218947" description="Signal peptidase complex subunit 3">
    <location>
        <begin position="1"/>
        <end position="190"/>
    </location>
</feature>
<feature type="topological domain" description="Cytoplasmic" evidence="3">
    <location>
        <begin position="1"/>
        <end position="9"/>
    </location>
</feature>
<feature type="transmembrane region" description="Helical; Signal-anchor for type II membrane protein" evidence="3">
    <location>
        <begin position="10"/>
        <end position="32"/>
    </location>
</feature>
<feature type="topological domain" description="Lumenal" evidence="3">
    <location>
        <begin position="33"/>
        <end position="190"/>
    </location>
</feature>
<sequence length="190" mass="21768">MFNIVTRFQYAANQALTSSIIIAGIVIVSSLLQLYSNNAWSLGTTSISNIKPQVSLKHSFNYGSVNRKPKENSRIQFDLETDLSPLFNWNTKQLFVYLTAEYPGKSDGSSNKITYWDKIITSKEDAVLSLKNQKSKYSVWDIEPSFRQRDAVVKLEWNLQPHIGPLIFGETDEIADFKFAEYVDKKKEQK</sequence>
<gene>
    <name type="primary">SPC3</name>
    <name type="ordered locus">DEHA2E14454g</name>
</gene>
<evidence type="ECO:0000250" key="1">
    <source>
        <dbReference type="UniProtKB" id="P67812"/>
    </source>
</evidence>
<evidence type="ECO:0000250" key="2">
    <source>
        <dbReference type="UniProtKB" id="Q12133"/>
    </source>
</evidence>
<evidence type="ECO:0000255" key="3"/>
<evidence type="ECO:0000305" key="4"/>
<accession>Q6BPD6</accession>
<name>SPC3_DEBHA</name>
<protein>
    <recommendedName>
        <fullName>Signal peptidase complex subunit 3</fullName>
    </recommendedName>
    <alternativeName>
        <fullName>Microsomal signal peptidase subunit 3</fullName>
    </alternativeName>
</protein>